<name>PYRB_NEIMA</name>
<comment type="function">
    <text evidence="1">Catalyzes the condensation of carbamoyl phosphate and aspartate to form carbamoyl aspartate and inorganic phosphate, the committed step in the de novo pyrimidine nucleotide biosynthesis pathway.</text>
</comment>
<comment type="catalytic activity">
    <reaction evidence="1">
        <text>carbamoyl phosphate + L-aspartate = N-carbamoyl-L-aspartate + phosphate + H(+)</text>
        <dbReference type="Rhea" id="RHEA:20013"/>
        <dbReference type="ChEBI" id="CHEBI:15378"/>
        <dbReference type="ChEBI" id="CHEBI:29991"/>
        <dbReference type="ChEBI" id="CHEBI:32814"/>
        <dbReference type="ChEBI" id="CHEBI:43474"/>
        <dbReference type="ChEBI" id="CHEBI:58228"/>
        <dbReference type="EC" id="2.1.3.2"/>
    </reaction>
</comment>
<comment type="pathway">
    <text evidence="1">Pyrimidine metabolism; UMP biosynthesis via de novo pathway; (S)-dihydroorotate from bicarbonate: step 2/3.</text>
</comment>
<comment type="subunit">
    <text evidence="1">Heterododecamer (2C3:3R2) of six catalytic PyrB chains organized as two trimers (C3), and six regulatory PyrI chains organized as three dimers (R2).</text>
</comment>
<comment type="similarity">
    <text evidence="1">Belongs to the aspartate/ornithine carbamoyltransferase superfamily. ATCase family.</text>
</comment>
<keyword id="KW-0665">Pyrimidine biosynthesis</keyword>
<keyword id="KW-0808">Transferase</keyword>
<protein>
    <recommendedName>
        <fullName evidence="1">Aspartate carbamoyltransferase catalytic subunit</fullName>
        <ecNumber evidence="1">2.1.3.2</ecNumber>
    </recommendedName>
    <alternativeName>
        <fullName evidence="1">Aspartate transcarbamylase</fullName>
        <shortName evidence="1">ATCase</shortName>
    </alternativeName>
</protein>
<proteinExistence type="inferred from homology"/>
<reference key="1">
    <citation type="journal article" date="2000" name="Nature">
        <title>Complete DNA sequence of a serogroup A strain of Neisseria meningitidis Z2491.</title>
        <authorList>
            <person name="Parkhill J."/>
            <person name="Achtman M."/>
            <person name="James K.D."/>
            <person name="Bentley S.D."/>
            <person name="Churcher C.M."/>
            <person name="Klee S.R."/>
            <person name="Morelli G."/>
            <person name="Basham D."/>
            <person name="Brown D."/>
            <person name="Chillingworth T."/>
            <person name="Davies R.M."/>
            <person name="Davis P."/>
            <person name="Devlin K."/>
            <person name="Feltwell T."/>
            <person name="Hamlin N."/>
            <person name="Holroyd S."/>
            <person name="Jagels K."/>
            <person name="Leather S."/>
            <person name="Moule S."/>
            <person name="Mungall K.L."/>
            <person name="Quail M.A."/>
            <person name="Rajandream M.A."/>
            <person name="Rutherford K.M."/>
            <person name="Simmonds M."/>
            <person name="Skelton J."/>
            <person name="Whitehead S."/>
            <person name="Spratt B.G."/>
            <person name="Barrell B.G."/>
        </authorList>
    </citation>
    <scope>NUCLEOTIDE SEQUENCE [LARGE SCALE GENOMIC DNA]</scope>
    <source>
        <strain>DSM 15465 / Z2491</strain>
    </source>
</reference>
<sequence length="306" mass="34205">MPNPLYRQHIISISDLSREQLECLLQTALKLKAHPRGDLLEGKLIGSCFFEPSTRTRLSFETAVQRLGGKVIGFSDGANTSAKKGETLADTARIISGYTDAIIQRHPKDGAARVAAEFSRVPVINAGDGTNQHPSQTLLDLVTIYETQGRLDKLKIAMAGDLKYGRTVHSLCQALKRWNCEFAFVSPPSLAMPDYITEELDEAGCRYRILGSLEEAAEWADILYMTRVQRERFDEQEFAKIQGKFNLEASMLARAKPNLRVLHPLPRVDEIHPDVDATPHAYYFEQATNGVYARMAILSLVLNEEV</sequence>
<gene>
    <name evidence="1" type="primary">pyrB</name>
    <name type="ordered locus">NMA0168</name>
</gene>
<organism>
    <name type="scientific">Neisseria meningitidis serogroup A / serotype 4A (strain DSM 15465 / Z2491)</name>
    <dbReference type="NCBI Taxonomy" id="122587"/>
    <lineage>
        <taxon>Bacteria</taxon>
        <taxon>Pseudomonadati</taxon>
        <taxon>Pseudomonadota</taxon>
        <taxon>Betaproteobacteria</taxon>
        <taxon>Neisseriales</taxon>
        <taxon>Neisseriaceae</taxon>
        <taxon>Neisseria</taxon>
    </lineage>
</organism>
<feature type="chain" id="PRO_0000113164" description="Aspartate carbamoyltransferase catalytic subunit">
    <location>
        <begin position="1"/>
        <end position="306"/>
    </location>
</feature>
<feature type="binding site" evidence="1">
    <location>
        <position position="55"/>
    </location>
    <ligand>
        <name>carbamoyl phosphate</name>
        <dbReference type="ChEBI" id="CHEBI:58228"/>
    </ligand>
</feature>
<feature type="binding site" evidence="1">
    <location>
        <position position="56"/>
    </location>
    <ligand>
        <name>carbamoyl phosphate</name>
        <dbReference type="ChEBI" id="CHEBI:58228"/>
    </ligand>
</feature>
<feature type="binding site" evidence="1">
    <location>
        <position position="84"/>
    </location>
    <ligand>
        <name>L-aspartate</name>
        <dbReference type="ChEBI" id="CHEBI:29991"/>
    </ligand>
</feature>
<feature type="binding site" evidence="1">
    <location>
        <position position="105"/>
    </location>
    <ligand>
        <name>carbamoyl phosphate</name>
        <dbReference type="ChEBI" id="CHEBI:58228"/>
    </ligand>
</feature>
<feature type="binding site" evidence="1">
    <location>
        <position position="133"/>
    </location>
    <ligand>
        <name>carbamoyl phosphate</name>
        <dbReference type="ChEBI" id="CHEBI:58228"/>
    </ligand>
</feature>
<feature type="binding site" evidence="1">
    <location>
        <position position="136"/>
    </location>
    <ligand>
        <name>carbamoyl phosphate</name>
        <dbReference type="ChEBI" id="CHEBI:58228"/>
    </ligand>
</feature>
<feature type="binding site" evidence="1">
    <location>
        <position position="166"/>
    </location>
    <ligand>
        <name>L-aspartate</name>
        <dbReference type="ChEBI" id="CHEBI:29991"/>
    </ligand>
</feature>
<feature type="binding site" evidence="1">
    <location>
        <position position="227"/>
    </location>
    <ligand>
        <name>L-aspartate</name>
        <dbReference type="ChEBI" id="CHEBI:29991"/>
    </ligand>
</feature>
<feature type="binding site" evidence="1">
    <location>
        <position position="265"/>
    </location>
    <ligand>
        <name>carbamoyl phosphate</name>
        <dbReference type="ChEBI" id="CHEBI:58228"/>
    </ligand>
</feature>
<feature type="binding site" evidence="1">
    <location>
        <position position="266"/>
    </location>
    <ligand>
        <name>carbamoyl phosphate</name>
        <dbReference type="ChEBI" id="CHEBI:58228"/>
    </ligand>
</feature>
<evidence type="ECO:0000255" key="1">
    <source>
        <dbReference type="HAMAP-Rule" id="MF_00001"/>
    </source>
</evidence>
<accession>P65615</accession>
<accession>A1IP28</accession>
<accession>Q9JQU5</accession>
<dbReference type="EC" id="2.1.3.2" evidence="1"/>
<dbReference type="EMBL" id="AL157959">
    <property type="protein sequence ID" value="CAM07485.1"/>
    <property type="molecule type" value="Genomic_DNA"/>
</dbReference>
<dbReference type="RefSeq" id="WP_002215336.1">
    <property type="nucleotide sequence ID" value="NC_003116.1"/>
</dbReference>
<dbReference type="SMR" id="P65615"/>
<dbReference type="EnsemblBacteria" id="CAM07485">
    <property type="protein sequence ID" value="CAM07485"/>
    <property type="gene ID" value="NMA0168"/>
</dbReference>
<dbReference type="GeneID" id="93387178"/>
<dbReference type="KEGG" id="nma:NMA0168"/>
<dbReference type="HOGENOM" id="CLU_043846_1_2_4"/>
<dbReference type="UniPathway" id="UPA00070">
    <property type="reaction ID" value="UER00116"/>
</dbReference>
<dbReference type="Proteomes" id="UP000000626">
    <property type="component" value="Chromosome"/>
</dbReference>
<dbReference type="GO" id="GO:0005829">
    <property type="term" value="C:cytosol"/>
    <property type="evidence" value="ECO:0007669"/>
    <property type="project" value="TreeGrafter"/>
</dbReference>
<dbReference type="GO" id="GO:0016597">
    <property type="term" value="F:amino acid binding"/>
    <property type="evidence" value="ECO:0007669"/>
    <property type="project" value="InterPro"/>
</dbReference>
<dbReference type="GO" id="GO:0004070">
    <property type="term" value="F:aspartate carbamoyltransferase activity"/>
    <property type="evidence" value="ECO:0007669"/>
    <property type="project" value="UniProtKB-UniRule"/>
</dbReference>
<dbReference type="GO" id="GO:0006207">
    <property type="term" value="P:'de novo' pyrimidine nucleobase biosynthetic process"/>
    <property type="evidence" value="ECO:0007669"/>
    <property type="project" value="InterPro"/>
</dbReference>
<dbReference type="GO" id="GO:0044205">
    <property type="term" value="P:'de novo' UMP biosynthetic process"/>
    <property type="evidence" value="ECO:0007669"/>
    <property type="project" value="UniProtKB-UniRule"/>
</dbReference>
<dbReference type="GO" id="GO:0006520">
    <property type="term" value="P:amino acid metabolic process"/>
    <property type="evidence" value="ECO:0007669"/>
    <property type="project" value="InterPro"/>
</dbReference>
<dbReference type="FunFam" id="3.40.50.1370:FF:000001">
    <property type="entry name" value="Aspartate carbamoyltransferase"/>
    <property type="match status" value="1"/>
</dbReference>
<dbReference type="FunFam" id="3.40.50.1370:FF:000002">
    <property type="entry name" value="Aspartate carbamoyltransferase 2"/>
    <property type="match status" value="1"/>
</dbReference>
<dbReference type="Gene3D" id="3.40.50.1370">
    <property type="entry name" value="Aspartate/ornithine carbamoyltransferase"/>
    <property type="match status" value="2"/>
</dbReference>
<dbReference type="HAMAP" id="MF_00001">
    <property type="entry name" value="Asp_carb_tr"/>
    <property type="match status" value="1"/>
</dbReference>
<dbReference type="InterPro" id="IPR006132">
    <property type="entry name" value="Asp/Orn_carbamoyltranf_P-bd"/>
</dbReference>
<dbReference type="InterPro" id="IPR006130">
    <property type="entry name" value="Asp/Orn_carbamoylTrfase"/>
</dbReference>
<dbReference type="InterPro" id="IPR036901">
    <property type="entry name" value="Asp/Orn_carbamoylTrfase_sf"/>
</dbReference>
<dbReference type="InterPro" id="IPR002082">
    <property type="entry name" value="Asp_carbamoyltransf"/>
</dbReference>
<dbReference type="InterPro" id="IPR006131">
    <property type="entry name" value="Asp_carbamoyltransf_Asp/Orn-bd"/>
</dbReference>
<dbReference type="NCBIfam" id="TIGR00670">
    <property type="entry name" value="asp_carb_tr"/>
    <property type="match status" value="1"/>
</dbReference>
<dbReference type="NCBIfam" id="NF002032">
    <property type="entry name" value="PRK00856.1"/>
    <property type="match status" value="1"/>
</dbReference>
<dbReference type="PANTHER" id="PTHR45753:SF6">
    <property type="entry name" value="ASPARTATE CARBAMOYLTRANSFERASE"/>
    <property type="match status" value="1"/>
</dbReference>
<dbReference type="PANTHER" id="PTHR45753">
    <property type="entry name" value="ORNITHINE CARBAMOYLTRANSFERASE, MITOCHONDRIAL"/>
    <property type="match status" value="1"/>
</dbReference>
<dbReference type="Pfam" id="PF00185">
    <property type="entry name" value="OTCace"/>
    <property type="match status" value="1"/>
</dbReference>
<dbReference type="Pfam" id="PF02729">
    <property type="entry name" value="OTCace_N"/>
    <property type="match status" value="1"/>
</dbReference>
<dbReference type="PRINTS" id="PR00100">
    <property type="entry name" value="AOTCASE"/>
</dbReference>
<dbReference type="PRINTS" id="PR00101">
    <property type="entry name" value="ATCASE"/>
</dbReference>
<dbReference type="SUPFAM" id="SSF53671">
    <property type="entry name" value="Aspartate/ornithine carbamoyltransferase"/>
    <property type="match status" value="1"/>
</dbReference>
<dbReference type="PROSITE" id="PS00097">
    <property type="entry name" value="CARBAMOYLTRANSFERASE"/>
    <property type="match status" value="1"/>
</dbReference>